<accession>V9ZAY0</accession>
<reference key="1">
    <citation type="journal article" date="2014" name="Biochim. Biophys. Acta">
        <title>Antarease-like Zn-metalloproteases are ubiquitous in the venom of different scorpion genera.</title>
        <authorList>
            <person name="Ortiz E."/>
            <person name="Rendon-Anaya M."/>
            <person name="Rego S.C."/>
            <person name="Schwartz E.F."/>
            <person name="Possani L.D."/>
        </authorList>
    </citation>
    <scope>NUCLEOTIDE SEQUENCE [MRNA]</scope>
    <scope>3D-STRUCTURE MODELING</scope>
    <source>
        <tissue>Venom gland</tissue>
    </source>
</reference>
<feature type="signal peptide" evidence="2">
    <location>
        <begin position="1"/>
        <end position="16"/>
    </location>
</feature>
<feature type="propeptide" id="PRO_0000429179" evidence="1">
    <location>
        <begin position="17"/>
        <end position="158"/>
    </location>
</feature>
<feature type="chain" id="PRO_0000429180" description="Venom metalloproteinase antarease-like TtrivMP_A">
    <location>
        <begin position="159"/>
        <end position="394"/>
    </location>
</feature>
<feature type="domain" description="Peptidase M12B" evidence="3">
    <location>
        <begin position="162"/>
        <end position="390"/>
    </location>
</feature>
<feature type="active site" evidence="3">
    <location>
        <position position="320"/>
    </location>
</feature>
<feature type="binding site" evidence="3">
    <location>
        <position position="319"/>
    </location>
    <ligand>
        <name>Zn(2+)</name>
        <dbReference type="ChEBI" id="CHEBI:29105"/>
        <note>catalytic</note>
    </ligand>
</feature>
<feature type="binding site" evidence="3">
    <location>
        <position position="323"/>
    </location>
    <ligand>
        <name>Zn(2+)</name>
        <dbReference type="ChEBI" id="CHEBI:29105"/>
        <note>catalytic</note>
    </ligand>
</feature>
<feature type="binding site" evidence="3">
    <location>
        <position position="329"/>
    </location>
    <ligand>
        <name>Zn(2+)</name>
        <dbReference type="ChEBI" id="CHEBI:29105"/>
        <note>catalytic</note>
    </ligand>
</feature>
<feature type="glycosylation site" description="N-linked (GlcNAc...) asparagine" evidence="2">
    <location>
        <position position="151"/>
    </location>
</feature>
<feature type="disulfide bond" evidence="3">
    <location>
        <begin position="295"/>
        <end position="386"/>
    </location>
</feature>
<organism>
    <name type="scientific">Tityus trivittatus</name>
    <name type="common">Argentinean scorpion</name>
    <dbReference type="NCBI Taxonomy" id="369776"/>
    <lineage>
        <taxon>Eukaryota</taxon>
        <taxon>Metazoa</taxon>
        <taxon>Ecdysozoa</taxon>
        <taxon>Arthropoda</taxon>
        <taxon>Chelicerata</taxon>
        <taxon>Arachnida</taxon>
        <taxon>Scorpiones</taxon>
        <taxon>Buthida</taxon>
        <taxon>Buthoidea</taxon>
        <taxon>Buthidae</taxon>
        <taxon>Tityus</taxon>
    </lineage>
</organism>
<protein>
    <recommendedName>
        <fullName>Venom metalloproteinase antarease-like TtrivMP_A</fullName>
        <shortName>VMPA</shortName>
        <ecNumber>3.4.24.-</ecNumber>
    </recommendedName>
</protein>
<sequence length="394" mass="43062">MISYLASIFLLATVSAVPSGRVEVVFPSVETSRSGVKTVKFTALDQNVELKLRSAGEILGKHFAIQDVDVESLRRKIYRDSVNGAALLIDEDGPLTIEGIVNSKLRIQPFESGRIIKDGMIAHQIVEVIDDKKSYDRVAVIHENVKRNAENVSRMAEENDCIVVEYYIVTDSAFTKRFKSNSALTNYVTVMFTGVQNLMDTLELGIGVRLLGVTAFNEETEPSFIKDNLIPGPPEAFEPDVLITAMSQYYCNHQTGLAKDTDLIFLITARGMGDPREDGTVDINTAGIANSAGVCKPCLKAGIATDDSNYNERVDTLAHESVHLLGSPHDGEGPDQVSVEGSPGAANCPAKAGYIMGNRKDPNKYKFSPCTKKCVEYLLSKPTAFCIFEQCSDF</sequence>
<proteinExistence type="evidence at transcript level"/>
<evidence type="ECO:0000250" key="1"/>
<evidence type="ECO:0000255" key="2"/>
<evidence type="ECO:0000255" key="3">
    <source>
        <dbReference type="PROSITE-ProRule" id="PRU00276"/>
    </source>
</evidence>
<evidence type="ECO:0000305" key="4"/>
<name>VMPA1_TITTR</name>
<comment type="function">
    <text evidence="1">Acts as a metalloprotease. Penetrates intact tissue and specifically cleaves the vesicle-associated membrane protein 2 (VAMP2) (part of the SNARE complex) involved in pancreatic secretion, thus disrupting the normal vesicular traffic (By similarity).</text>
</comment>
<comment type="cofactor">
    <cofactor evidence="1">
        <name>Zn(2+)</name>
        <dbReference type="ChEBI" id="CHEBI:29105"/>
    </cofactor>
    <text evidence="1">Binds 1 zinc ion per subunit.</text>
</comment>
<comment type="activity regulation">
    <text evidence="1">Inhibited by EDTA.</text>
</comment>
<comment type="subcellular location">
    <subcellularLocation>
        <location evidence="1">Secreted</location>
    </subcellularLocation>
</comment>
<comment type="tissue specificity">
    <text>Expressed by the venom gland.</text>
</comment>
<comment type="similarity">
    <text evidence="4">Belongs to the venom metalloproteinase (M12B) family.</text>
</comment>
<keyword id="KW-0106">Calcium</keyword>
<keyword id="KW-1015">Disulfide bond</keyword>
<keyword id="KW-0325">Glycoprotein</keyword>
<keyword id="KW-0378">Hydrolase</keyword>
<keyword id="KW-0479">Metal-binding</keyword>
<keyword id="KW-0482">Metalloprotease</keyword>
<keyword id="KW-0645">Protease</keyword>
<keyword id="KW-0964">Secreted</keyword>
<keyword id="KW-0732">Signal</keyword>
<keyword id="KW-0800">Toxin</keyword>
<keyword id="KW-0862">Zinc</keyword>
<dbReference type="EC" id="3.4.24.-"/>
<dbReference type="EMBL" id="KC693043">
    <property type="protein sequence ID" value="AHE40596.1"/>
    <property type="molecule type" value="mRNA"/>
</dbReference>
<dbReference type="SMR" id="V9ZAY0"/>
<dbReference type="GO" id="GO:0005576">
    <property type="term" value="C:extracellular region"/>
    <property type="evidence" value="ECO:0007669"/>
    <property type="project" value="UniProtKB-SubCell"/>
</dbReference>
<dbReference type="GO" id="GO:0046872">
    <property type="term" value="F:metal ion binding"/>
    <property type="evidence" value="ECO:0007669"/>
    <property type="project" value="UniProtKB-KW"/>
</dbReference>
<dbReference type="GO" id="GO:0004222">
    <property type="term" value="F:metalloendopeptidase activity"/>
    <property type="evidence" value="ECO:0007669"/>
    <property type="project" value="InterPro"/>
</dbReference>
<dbReference type="GO" id="GO:0090729">
    <property type="term" value="F:toxin activity"/>
    <property type="evidence" value="ECO:0007669"/>
    <property type="project" value="UniProtKB-KW"/>
</dbReference>
<dbReference type="GO" id="GO:0006509">
    <property type="term" value="P:membrane protein ectodomain proteolysis"/>
    <property type="evidence" value="ECO:0007669"/>
    <property type="project" value="TreeGrafter"/>
</dbReference>
<dbReference type="Gene3D" id="3.40.390.10">
    <property type="entry name" value="Collagenase (Catalytic Domain)"/>
    <property type="match status" value="1"/>
</dbReference>
<dbReference type="InterPro" id="IPR024079">
    <property type="entry name" value="MetalloPept_cat_dom_sf"/>
</dbReference>
<dbReference type="InterPro" id="IPR001590">
    <property type="entry name" value="Peptidase_M12B"/>
</dbReference>
<dbReference type="PANTHER" id="PTHR11905">
    <property type="entry name" value="ADAM A DISINTEGRIN AND METALLOPROTEASE DOMAIN"/>
    <property type="match status" value="1"/>
</dbReference>
<dbReference type="PANTHER" id="PTHR11905:SF159">
    <property type="entry name" value="ADAM METALLOPROTEASE"/>
    <property type="match status" value="1"/>
</dbReference>
<dbReference type="Pfam" id="PF13688">
    <property type="entry name" value="Reprolysin_5"/>
    <property type="match status" value="1"/>
</dbReference>
<dbReference type="SUPFAM" id="SSF55486">
    <property type="entry name" value="Metalloproteases ('zincins'), catalytic domain"/>
    <property type="match status" value="1"/>
</dbReference>
<dbReference type="PROSITE" id="PS50215">
    <property type="entry name" value="ADAM_MEPRO"/>
    <property type="match status" value="1"/>
</dbReference>